<reference key="1">
    <citation type="journal article" date="2007" name="Nat. Biotechnol.">
        <title>Genome sequencing and analysis of the versatile cell factory Aspergillus niger CBS 513.88.</title>
        <authorList>
            <person name="Pel H.J."/>
            <person name="de Winde J.H."/>
            <person name="Archer D.B."/>
            <person name="Dyer P.S."/>
            <person name="Hofmann G."/>
            <person name="Schaap P.J."/>
            <person name="Turner G."/>
            <person name="de Vries R.P."/>
            <person name="Albang R."/>
            <person name="Albermann K."/>
            <person name="Andersen M.R."/>
            <person name="Bendtsen J.D."/>
            <person name="Benen J.A.E."/>
            <person name="van den Berg M."/>
            <person name="Breestraat S."/>
            <person name="Caddick M.X."/>
            <person name="Contreras R."/>
            <person name="Cornell M."/>
            <person name="Coutinho P.M."/>
            <person name="Danchin E.G.J."/>
            <person name="Debets A.J.M."/>
            <person name="Dekker P."/>
            <person name="van Dijck P.W.M."/>
            <person name="van Dijk A."/>
            <person name="Dijkhuizen L."/>
            <person name="Driessen A.J.M."/>
            <person name="d'Enfert C."/>
            <person name="Geysens S."/>
            <person name="Goosen C."/>
            <person name="Groot G.S.P."/>
            <person name="de Groot P.W.J."/>
            <person name="Guillemette T."/>
            <person name="Henrissat B."/>
            <person name="Herweijer M."/>
            <person name="van den Hombergh J.P.T.W."/>
            <person name="van den Hondel C.A.M.J.J."/>
            <person name="van der Heijden R.T.J.M."/>
            <person name="van der Kaaij R.M."/>
            <person name="Klis F.M."/>
            <person name="Kools H.J."/>
            <person name="Kubicek C.P."/>
            <person name="van Kuyk P.A."/>
            <person name="Lauber J."/>
            <person name="Lu X."/>
            <person name="van der Maarel M.J.E.C."/>
            <person name="Meulenberg R."/>
            <person name="Menke H."/>
            <person name="Mortimer M.A."/>
            <person name="Nielsen J."/>
            <person name="Oliver S.G."/>
            <person name="Olsthoorn M."/>
            <person name="Pal K."/>
            <person name="van Peij N.N.M.E."/>
            <person name="Ram A.F.J."/>
            <person name="Rinas U."/>
            <person name="Roubos J.A."/>
            <person name="Sagt C.M.J."/>
            <person name="Schmoll M."/>
            <person name="Sun J."/>
            <person name="Ussery D."/>
            <person name="Varga J."/>
            <person name="Vervecken W."/>
            <person name="van de Vondervoort P.J.J."/>
            <person name="Wedler H."/>
            <person name="Woesten H.A.B."/>
            <person name="Zeng A.-P."/>
            <person name="van Ooyen A.J.J."/>
            <person name="Visser J."/>
            <person name="Stam H."/>
        </authorList>
    </citation>
    <scope>NUCLEOTIDE SEQUENCE [LARGE SCALE GENOMIC DNA]</scope>
    <source>
        <strain>ATCC MYA-4892 / CBS 513.88 / FGSC A1513</strain>
    </source>
</reference>
<proteinExistence type="inferred from homology"/>
<accession>A2QSG6</accession>
<gene>
    <name type="primary">sec24</name>
    <name type="ORF">An08g10650</name>
</gene>
<sequence>MAAPQGGYPPQEGYGQPAGYGSPVQQPAGLAAGAPAQGQAGGRKKRVYAGEAFDFGSGANAALGGQLPAGGSYGAYPPQPQAAGYQQPMYGADPTQVQAAAPGYAAPVSPQVAQMTQQFGAMGMTDPHLLPPQPVAPAPQAQAPRAVPLNQLYPTDLLTQPFNVAELDYPPPPIVLPPGTSVYPSPYANCPPKYVRSTLNAVPTTSSLLKKSKLPFALVIQPYAALHDSEDPVPVVPDQVISRCRRCRSYINPFVTFLDHGHRWRCNMCNLTNDVPQAFDWDTALQKPADRSLRPDLNHSVVEFVAPQEYMVRPPQPLVYLFLIDVSYASVTNGLLATTARCIRESLDRIPNADRRTRLGFIAVDSSLHYFSIPRDGSENSEPRMLVISDLDEPFLPIPGDLLVTLSECRENIEIFLDKLQEMFQNTQSNACAMGSALRAGYKLISPVGGKMTVLSSSLPNIGHGSLTMREDKKVLGTSKESSLLQTANSFYKSFAVECSKAQVSVDMFLFSSQYQDVASLSNLPRYTGGQTYFYPGWNAARGEDAIKFAREFSDYLSSEIGLEAVLRVRATTGLRMNTFYGNFFNRSSDLCAFPAFPRDQAYVVEVAIDETVTKPVVCLQTAVLHTTCNGERRIRVLTLALPTTQNLADVYASADQQAVATYFSHKAVERALSSGLEPAREALQTKAVELLSTYRKELAGGSVSGGGLQFPANLRGLPVLFLAMIKNLGLRKSAQIPTDMRSAALCLLSTLPLPLLMQYIYPKMYSLHDMPDTAGLPDEQTGEILLPPPINLSSERIVPYGLYLIDDGQTQFLWVGRDAVPQLIEDVFGLQDKSQLRVGKQNLPDVDNEFNQRVRAVVEKSRDHRSKGVGSIVVPHLYVVKEDGEPGLRLWAQTMLVEDRADQSVSLVQWMGSLREKV</sequence>
<comment type="function">
    <text evidence="1">Component of the coat protein complex II (COPII) which promotes the formation of transport vesicles from the endoplasmic reticulum (ER). The coat has two main functions, the physical deformation of the endoplasmic reticulum membrane into vesicles and the selection of cargo molecules (By similarity).</text>
</comment>
<comment type="subunit">
    <text evidence="1">The COPII coat is composed of at least 5 proteins: the sec23/24 complex, the sec13/31 complex, and the protein sar1. Golgi apparatus membrane; Peripheral membrane protein; Cytoplasmic side.</text>
</comment>
<comment type="subcellular location">
    <subcellularLocation>
        <location evidence="1">Cytoplasm</location>
    </subcellularLocation>
    <subcellularLocation>
        <location evidence="1">Cytoplasmic vesicle</location>
        <location evidence="1">COPII-coated vesicle membrane</location>
        <topology evidence="1">Peripheral membrane protein</topology>
        <orientation evidence="1">Cytoplasmic side</orientation>
    </subcellularLocation>
    <subcellularLocation>
        <location evidence="1">Endoplasmic reticulum membrane</location>
        <topology evidence="1">Peripheral membrane protein</topology>
        <orientation evidence="1">Cytoplasmic side</orientation>
    </subcellularLocation>
    <subcellularLocation>
        <location evidence="1">Golgi apparatus membrane</location>
        <topology evidence="1">Peripheral membrane protein</topology>
        <orientation evidence="1">Cytoplasmic side</orientation>
    </subcellularLocation>
</comment>
<comment type="similarity">
    <text evidence="3">Belongs to the SEC23/SEC24 family. SEC24 subfamily.</text>
</comment>
<feature type="chain" id="PRO_0000295478" description="Protein transport protein sec24">
    <location>
        <begin position="1"/>
        <end position="919"/>
    </location>
</feature>
<feature type="region of interest" description="Disordered" evidence="2">
    <location>
        <begin position="1"/>
        <end position="43"/>
    </location>
</feature>
<feature type="region of interest" description="Zinc finger-like">
    <location>
        <begin position="244"/>
        <end position="269"/>
    </location>
</feature>
<feature type="compositionally biased region" description="Low complexity" evidence="2">
    <location>
        <begin position="1"/>
        <end position="38"/>
    </location>
</feature>
<feature type="binding site" evidence="1">
    <location>
        <position position="244"/>
    </location>
    <ligand>
        <name>Zn(2+)</name>
        <dbReference type="ChEBI" id="CHEBI:29105"/>
    </ligand>
</feature>
<feature type="binding site" evidence="1">
    <location>
        <position position="247"/>
    </location>
    <ligand>
        <name>Zn(2+)</name>
        <dbReference type="ChEBI" id="CHEBI:29105"/>
    </ligand>
</feature>
<feature type="binding site" evidence="1">
    <location>
        <position position="266"/>
    </location>
    <ligand>
        <name>Zn(2+)</name>
        <dbReference type="ChEBI" id="CHEBI:29105"/>
    </ligand>
</feature>
<feature type="binding site" evidence="1">
    <location>
        <position position="269"/>
    </location>
    <ligand>
        <name>Zn(2+)</name>
        <dbReference type="ChEBI" id="CHEBI:29105"/>
    </ligand>
</feature>
<organism>
    <name type="scientific">Aspergillus niger (strain ATCC MYA-4892 / CBS 513.88 / FGSC A1513)</name>
    <dbReference type="NCBI Taxonomy" id="425011"/>
    <lineage>
        <taxon>Eukaryota</taxon>
        <taxon>Fungi</taxon>
        <taxon>Dikarya</taxon>
        <taxon>Ascomycota</taxon>
        <taxon>Pezizomycotina</taxon>
        <taxon>Eurotiomycetes</taxon>
        <taxon>Eurotiomycetidae</taxon>
        <taxon>Eurotiales</taxon>
        <taxon>Aspergillaceae</taxon>
        <taxon>Aspergillus</taxon>
        <taxon>Aspergillus subgen. Circumdati</taxon>
    </lineage>
</organism>
<dbReference type="EMBL" id="AM270183">
    <property type="protein sequence ID" value="CAK45738.1"/>
    <property type="molecule type" value="Genomic_DNA"/>
</dbReference>
<dbReference type="RefSeq" id="XP_001393169.1">
    <property type="nucleotide sequence ID" value="XM_001393132.2"/>
</dbReference>
<dbReference type="SMR" id="A2QSG6"/>
<dbReference type="EnsemblFungi" id="CAK45738">
    <property type="protein sequence ID" value="CAK45738"/>
    <property type="gene ID" value="An08g10650"/>
</dbReference>
<dbReference type="GeneID" id="4983379"/>
<dbReference type="KEGG" id="ang:An08g10650"/>
<dbReference type="HOGENOM" id="CLU_004589_2_1_1"/>
<dbReference type="Proteomes" id="UP000006706">
    <property type="component" value="Chromosome 8R"/>
</dbReference>
<dbReference type="GO" id="GO:0005801">
    <property type="term" value="C:cis-Golgi network"/>
    <property type="evidence" value="ECO:0007669"/>
    <property type="project" value="EnsemblFungi"/>
</dbReference>
<dbReference type="GO" id="GO:0030127">
    <property type="term" value="C:COPII vesicle coat"/>
    <property type="evidence" value="ECO:0007669"/>
    <property type="project" value="InterPro"/>
</dbReference>
<dbReference type="GO" id="GO:0070971">
    <property type="term" value="C:endoplasmic reticulum exit site"/>
    <property type="evidence" value="ECO:0007669"/>
    <property type="project" value="EnsemblFungi"/>
</dbReference>
<dbReference type="GO" id="GO:0005789">
    <property type="term" value="C:endoplasmic reticulum membrane"/>
    <property type="evidence" value="ECO:0007669"/>
    <property type="project" value="UniProtKB-SubCell"/>
</dbReference>
<dbReference type="GO" id="GO:1990753">
    <property type="term" value="C:equatorial cell cortex"/>
    <property type="evidence" value="ECO:0007669"/>
    <property type="project" value="EnsemblFungi"/>
</dbReference>
<dbReference type="GO" id="GO:0000139">
    <property type="term" value="C:Golgi membrane"/>
    <property type="evidence" value="ECO:0007669"/>
    <property type="project" value="UniProtKB-SubCell"/>
</dbReference>
<dbReference type="GO" id="GO:0000149">
    <property type="term" value="F:SNARE binding"/>
    <property type="evidence" value="ECO:0007669"/>
    <property type="project" value="TreeGrafter"/>
</dbReference>
<dbReference type="GO" id="GO:0008270">
    <property type="term" value="F:zinc ion binding"/>
    <property type="evidence" value="ECO:0007669"/>
    <property type="project" value="InterPro"/>
</dbReference>
<dbReference type="GO" id="GO:0090110">
    <property type="term" value="P:COPII-coated vesicle cargo loading"/>
    <property type="evidence" value="ECO:0007669"/>
    <property type="project" value="TreeGrafter"/>
</dbReference>
<dbReference type="GO" id="GO:0006886">
    <property type="term" value="P:intracellular protein transport"/>
    <property type="evidence" value="ECO:0007669"/>
    <property type="project" value="InterPro"/>
</dbReference>
<dbReference type="CDD" id="cd01479">
    <property type="entry name" value="Sec24-like"/>
    <property type="match status" value="1"/>
</dbReference>
<dbReference type="Gene3D" id="2.60.40.1670">
    <property type="entry name" value="beta-sandwich domain of Sec23/24"/>
    <property type="match status" value="1"/>
</dbReference>
<dbReference type="Gene3D" id="1.20.120.730">
    <property type="entry name" value="Sec23/Sec24 helical domain"/>
    <property type="match status" value="1"/>
</dbReference>
<dbReference type="Gene3D" id="3.40.20.10">
    <property type="entry name" value="Severin"/>
    <property type="match status" value="1"/>
</dbReference>
<dbReference type="Gene3D" id="3.40.50.410">
    <property type="entry name" value="von Willebrand factor, type A domain"/>
    <property type="match status" value="1"/>
</dbReference>
<dbReference type="Gene3D" id="2.30.30.380">
    <property type="entry name" value="Zn-finger domain of Sec23/24"/>
    <property type="match status" value="1"/>
</dbReference>
<dbReference type="InterPro" id="IPR029006">
    <property type="entry name" value="ADF-H/Gelsolin-like_dom_sf"/>
</dbReference>
<dbReference type="InterPro" id="IPR007123">
    <property type="entry name" value="Gelsolin-like_dom"/>
</dbReference>
<dbReference type="InterPro" id="IPR036180">
    <property type="entry name" value="Gelsolin-like_dom_sf"/>
</dbReference>
<dbReference type="InterPro" id="IPR006900">
    <property type="entry name" value="Sec23/24_helical_dom"/>
</dbReference>
<dbReference type="InterPro" id="IPR036175">
    <property type="entry name" value="Sec23/24_helical_dom_sf"/>
</dbReference>
<dbReference type="InterPro" id="IPR006896">
    <property type="entry name" value="Sec23/24_trunk_dom"/>
</dbReference>
<dbReference type="InterPro" id="IPR012990">
    <property type="entry name" value="Sec23_24_beta_S"/>
</dbReference>
<dbReference type="InterPro" id="IPR050550">
    <property type="entry name" value="SEC23_SEC24_subfamily"/>
</dbReference>
<dbReference type="InterPro" id="IPR041742">
    <property type="entry name" value="Sec24-like_trunk_dom"/>
</dbReference>
<dbReference type="InterPro" id="IPR036465">
    <property type="entry name" value="vWFA_dom_sf"/>
</dbReference>
<dbReference type="InterPro" id="IPR006895">
    <property type="entry name" value="Znf_Sec23_Sec24"/>
</dbReference>
<dbReference type="InterPro" id="IPR036174">
    <property type="entry name" value="Znf_Sec23_Sec24_sf"/>
</dbReference>
<dbReference type="PANTHER" id="PTHR13803">
    <property type="entry name" value="SEC24-RELATED PROTEIN"/>
    <property type="match status" value="1"/>
</dbReference>
<dbReference type="PANTHER" id="PTHR13803:SF39">
    <property type="entry name" value="SECRETORY 24AB, ISOFORM A"/>
    <property type="match status" value="1"/>
</dbReference>
<dbReference type="Pfam" id="PF00626">
    <property type="entry name" value="Gelsolin"/>
    <property type="match status" value="1"/>
</dbReference>
<dbReference type="Pfam" id="PF08033">
    <property type="entry name" value="Sec23_BS"/>
    <property type="match status" value="1"/>
</dbReference>
<dbReference type="Pfam" id="PF04815">
    <property type="entry name" value="Sec23_helical"/>
    <property type="match status" value="1"/>
</dbReference>
<dbReference type="Pfam" id="PF04811">
    <property type="entry name" value="Sec23_trunk"/>
    <property type="match status" value="1"/>
</dbReference>
<dbReference type="Pfam" id="PF04810">
    <property type="entry name" value="zf-Sec23_Sec24"/>
    <property type="match status" value="1"/>
</dbReference>
<dbReference type="SUPFAM" id="SSF81995">
    <property type="entry name" value="beta-sandwich domain of Sec23/24"/>
    <property type="match status" value="1"/>
</dbReference>
<dbReference type="SUPFAM" id="SSF82754">
    <property type="entry name" value="C-terminal, gelsolin-like domain of Sec23/24"/>
    <property type="match status" value="1"/>
</dbReference>
<dbReference type="SUPFAM" id="SSF81811">
    <property type="entry name" value="Helical domain of Sec23/24"/>
    <property type="match status" value="1"/>
</dbReference>
<dbReference type="SUPFAM" id="SSF53300">
    <property type="entry name" value="vWA-like"/>
    <property type="match status" value="1"/>
</dbReference>
<dbReference type="SUPFAM" id="SSF82919">
    <property type="entry name" value="Zn-finger domain of Sec23/24"/>
    <property type="match status" value="1"/>
</dbReference>
<keyword id="KW-0963">Cytoplasm</keyword>
<keyword id="KW-0968">Cytoplasmic vesicle</keyword>
<keyword id="KW-0256">Endoplasmic reticulum</keyword>
<keyword id="KW-0931">ER-Golgi transport</keyword>
<keyword id="KW-0333">Golgi apparatus</keyword>
<keyword id="KW-0472">Membrane</keyword>
<keyword id="KW-0479">Metal-binding</keyword>
<keyword id="KW-0653">Protein transport</keyword>
<keyword id="KW-1185">Reference proteome</keyword>
<keyword id="KW-0813">Transport</keyword>
<keyword id="KW-0862">Zinc</keyword>
<evidence type="ECO:0000250" key="1"/>
<evidence type="ECO:0000256" key="2">
    <source>
        <dbReference type="SAM" id="MobiDB-lite"/>
    </source>
</evidence>
<evidence type="ECO:0000305" key="3"/>
<protein>
    <recommendedName>
        <fullName>Protein transport protein sec24</fullName>
    </recommendedName>
</protein>
<name>SEC24_ASPNC</name>